<keyword id="KW-0030">Aminoacyl-tRNA synthetase</keyword>
<keyword id="KW-0067">ATP-binding</keyword>
<keyword id="KW-0963">Cytoplasm</keyword>
<keyword id="KW-0436">Ligase</keyword>
<keyword id="KW-0547">Nucleotide-binding</keyword>
<keyword id="KW-0648">Protein biosynthesis</keyword>
<gene>
    <name evidence="1" type="primary">argS</name>
    <name type="ordered locus">SG1248</name>
</gene>
<comment type="catalytic activity">
    <reaction evidence="1">
        <text>tRNA(Arg) + L-arginine + ATP = L-arginyl-tRNA(Arg) + AMP + diphosphate</text>
        <dbReference type="Rhea" id="RHEA:20301"/>
        <dbReference type="Rhea" id="RHEA-COMP:9658"/>
        <dbReference type="Rhea" id="RHEA-COMP:9673"/>
        <dbReference type="ChEBI" id="CHEBI:30616"/>
        <dbReference type="ChEBI" id="CHEBI:32682"/>
        <dbReference type="ChEBI" id="CHEBI:33019"/>
        <dbReference type="ChEBI" id="CHEBI:78442"/>
        <dbReference type="ChEBI" id="CHEBI:78513"/>
        <dbReference type="ChEBI" id="CHEBI:456215"/>
        <dbReference type="EC" id="6.1.1.19"/>
    </reaction>
</comment>
<comment type="subunit">
    <text evidence="1">Monomer.</text>
</comment>
<comment type="subcellular location">
    <subcellularLocation>
        <location evidence="1">Cytoplasm</location>
    </subcellularLocation>
</comment>
<comment type="similarity">
    <text evidence="1">Belongs to the class-I aminoacyl-tRNA synthetase family.</text>
</comment>
<sequence length="576" mass="63717">MNIHTLLSEKIQQALVAAGAPADCEAQVRQSAKAQFGDYQANGVMAIAKQLGLPPRKLAENVVGLLNLDGIARKVDIAGPGFINIFLEPSWLANHLAAALSSPRLGIASVASQTIVVDYSAPNVAKEMHVGHVRSTIIGDASVRTLSFLGHNVIRANHVGDWGTQFGMLIAYLEKVQDGGEAEMQLSSLESFYRAAKQHYDEDPAFAERARGYVVKLQGGDEYCRQMWRKLVDVTMAQNQKTYNRLNVTLTRADVMGESLYNDMLPGIVADLKAKGLAVESEGATVVFLDEFKNKEGEPMGVIIQKKDGAYLYTTTDIACAKYRYETLKADRIIYYIDSRQHQHLMLAWTIVRKAGYVPESVPLEHHMFGMMLGKDGKPFKTRAGGTIKLTELLDEALERARRLVAAKNPSMDAGELARLAQVVGIGAVKYADLSKSRTTDYVFDWDNMLSFEGNTAPYMQYAYTRVASIFKRSGQDEQQLTGDIRLEAEQETQLAVRLLQLEEAIATVARDGTPHVLCAYLYDLAVLFSAFYEHCPILNAENAALRQSRLQLALLTARTLKKGLDLLGIETVERM</sequence>
<accession>Q2NTK2</accession>
<proteinExistence type="inferred from homology"/>
<evidence type="ECO:0000255" key="1">
    <source>
        <dbReference type="HAMAP-Rule" id="MF_00123"/>
    </source>
</evidence>
<dbReference type="EC" id="6.1.1.19" evidence="1"/>
<dbReference type="EMBL" id="AP008232">
    <property type="protein sequence ID" value="BAE74523.1"/>
    <property type="molecule type" value="Genomic_DNA"/>
</dbReference>
<dbReference type="RefSeq" id="WP_011411077.1">
    <property type="nucleotide sequence ID" value="NC_007712.1"/>
</dbReference>
<dbReference type="SMR" id="Q2NTK2"/>
<dbReference type="STRING" id="343509.SG1248"/>
<dbReference type="KEGG" id="sgl:SG1248"/>
<dbReference type="eggNOG" id="COG0018">
    <property type="taxonomic scope" value="Bacteria"/>
</dbReference>
<dbReference type="HOGENOM" id="CLU_006406_5_1_6"/>
<dbReference type="OrthoDB" id="9803211at2"/>
<dbReference type="Proteomes" id="UP000001932">
    <property type="component" value="Chromosome"/>
</dbReference>
<dbReference type="GO" id="GO:0005737">
    <property type="term" value="C:cytoplasm"/>
    <property type="evidence" value="ECO:0007669"/>
    <property type="project" value="UniProtKB-SubCell"/>
</dbReference>
<dbReference type="GO" id="GO:0004814">
    <property type="term" value="F:arginine-tRNA ligase activity"/>
    <property type="evidence" value="ECO:0007669"/>
    <property type="project" value="UniProtKB-UniRule"/>
</dbReference>
<dbReference type="GO" id="GO:0005524">
    <property type="term" value="F:ATP binding"/>
    <property type="evidence" value="ECO:0007669"/>
    <property type="project" value="UniProtKB-UniRule"/>
</dbReference>
<dbReference type="GO" id="GO:0006420">
    <property type="term" value="P:arginyl-tRNA aminoacylation"/>
    <property type="evidence" value="ECO:0007669"/>
    <property type="project" value="UniProtKB-UniRule"/>
</dbReference>
<dbReference type="CDD" id="cd07956">
    <property type="entry name" value="Anticodon_Ia_Arg"/>
    <property type="match status" value="1"/>
</dbReference>
<dbReference type="CDD" id="cd00671">
    <property type="entry name" value="ArgRS_core"/>
    <property type="match status" value="1"/>
</dbReference>
<dbReference type="FunFam" id="1.10.730.10:FF:000001">
    <property type="entry name" value="Arginine--tRNA ligase"/>
    <property type="match status" value="1"/>
</dbReference>
<dbReference type="FunFam" id="3.40.50.620:FF:000030">
    <property type="entry name" value="Arginine--tRNA ligase"/>
    <property type="match status" value="1"/>
</dbReference>
<dbReference type="Gene3D" id="3.30.1360.70">
    <property type="entry name" value="Arginyl tRNA synthetase N-terminal domain"/>
    <property type="match status" value="1"/>
</dbReference>
<dbReference type="Gene3D" id="3.40.50.620">
    <property type="entry name" value="HUPs"/>
    <property type="match status" value="1"/>
</dbReference>
<dbReference type="Gene3D" id="1.10.730.10">
    <property type="entry name" value="Isoleucyl-tRNA Synthetase, Domain 1"/>
    <property type="match status" value="1"/>
</dbReference>
<dbReference type="HAMAP" id="MF_00123">
    <property type="entry name" value="Arg_tRNA_synth"/>
    <property type="match status" value="1"/>
</dbReference>
<dbReference type="InterPro" id="IPR001412">
    <property type="entry name" value="aa-tRNA-synth_I_CS"/>
</dbReference>
<dbReference type="InterPro" id="IPR001278">
    <property type="entry name" value="Arg-tRNA-ligase"/>
</dbReference>
<dbReference type="InterPro" id="IPR005148">
    <property type="entry name" value="Arg-tRNA-synth_N"/>
</dbReference>
<dbReference type="InterPro" id="IPR036695">
    <property type="entry name" value="Arg-tRNA-synth_N_sf"/>
</dbReference>
<dbReference type="InterPro" id="IPR035684">
    <property type="entry name" value="ArgRS_core"/>
</dbReference>
<dbReference type="InterPro" id="IPR008909">
    <property type="entry name" value="DALR_anticod-bd"/>
</dbReference>
<dbReference type="InterPro" id="IPR014729">
    <property type="entry name" value="Rossmann-like_a/b/a_fold"/>
</dbReference>
<dbReference type="InterPro" id="IPR009080">
    <property type="entry name" value="tRNAsynth_Ia_anticodon-bd"/>
</dbReference>
<dbReference type="NCBIfam" id="TIGR00456">
    <property type="entry name" value="argS"/>
    <property type="match status" value="1"/>
</dbReference>
<dbReference type="PANTHER" id="PTHR11956:SF5">
    <property type="entry name" value="ARGININE--TRNA LIGASE, CYTOPLASMIC"/>
    <property type="match status" value="1"/>
</dbReference>
<dbReference type="PANTHER" id="PTHR11956">
    <property type="entry name" value="ARGINYL-TRNA SYNTHETASE"/>
    <property type="match status" value="1"/>
</dbReference>
<dbReference type="Pfam" id="PF03485">
    <property type="entry name" value="Arg_tRNA_synt_N"/>
    <property type="match status" value="1"/>
</dbReference>
<dbReference type="Pfam" id="PF05746">
    <property type="entry name" value="DALR_1"/>
    <property type="match status" value="1"/>
</dbReference>
<dbReference type="Pfam" id="PF00750">
    <property type="entry name" value="tRNA-synt_1d"/>
    <property type="match status" value="1"/>
</dbReference>
<dbReference type="PRINTS" id="PR01038">
    <property type="entry name" value="TRNASYNTHARG"/>
</dbReference>
<dbReference type="SMART" id="SM01016">
    <property type="entry name" value="Arg_tRNA_synt_N"/>
    <property type="match status" value="1"/>
</dbReference>
<dbReference type="SMART" id="SM00836">
    <property type="entry name" value="DALR_1"/>
    <property type="match status" value="1"/>
</dbReference>
<dbReference type="SUPFAM" id="SSF47323">
    <property type="entry name" value="Anticodon-binding domain of a subclass of class I aminoacyl-tRNA synthetases"/>
    <property type="match status" value="1"/>
</dbReference>
<dbReference type="SUPFAM" id="SSF55190">
    <property type="entry name" value="Arginyl-tRNA synthetase (ArgRS), N-terminal 'additional' domain"/>
    <property type="match status" value="1"/>
</dbReference>
<dbReference type="SUPFAM" id="SSF52374">
    <property type="entry name" value="Nucleotidylyl transferase"/>
    <property type="match status" value="1"/>
</dbReference>
<dbReference type="PROSITE" id="PS00178">
    <property type="entry name" value="AA_TRNA_LIGASE_I"/>
    <property type="match status" value="1"/>
</dbReference>
<organism>
    <name type="scientific">Sodalis glossinidius (strain morsitans)</name>
    <dbReference type="NCBI Taxonomy" id="343509"/>
    <lineage>
        <taxon>Bacteria</taxon>
        <taxon>Pseudomonadati</taxon>
        <taxon>Pseudomonadota</taxon>
        <taxon>Gammaproteobacteria</taxon>
        <taxon>Enterobacterales</taxon>
        <taxon>Bruguierivoracaceae</taxon>
        <taxon>Sodalis</taxon>
    </lineage>
</organism>
<name>SYR_SODGM</name>
<reference key="1">
    <citation type="journal article" date="2006" name="Genome Res.">
        <title>Massive genome erosion and functional adaptations provide insights into the symbiotic lifestyle of Sodalis glossinidius in the tsetse host.</title>
        <authorList>
            <person name="Toh H."/>
            <person name="Weiss B.L."/>
            <person name="Perkin S.A.H."/>
            <person name="Yamashita A."/>
            <person name="Oshima K."/>
            <person name="Hattori M."/>
            <person name="Aksoy S."/>
        </authorList>
    </citation>
    <scope>NUCLEOTIDE SEQUENCE [LARGE SCALE GENOMIC DNA]</scope>
    <source>
        <strain>morsitans</strain>
    </source>
</reference>
<protein>
    <recommendedName>
        <fullName evidence="1">Arginine--tRNA ligase</fullName>
        <ecNumber evidence="1">6.1.1.19</ecNumber>
    </recommendedName>
    <alternativeName>
        <fullName evidence="1">Arginyl-tRNA synthetase</fullName>
        <shortName evidence="1">ArgRS</shortName>
    </alternativeName>
</protein>
<feature type="chain" id="PRO_0000242094" description="Arginine--tRNA ligase">
    <location>
        <begin position="1"/>
        <end position="576"/>
    </location>
</feature>
<feature type="short sequence motif" description="'HIGH' region">
    <location>
        <begin position="122"/>
        <end position="132"/>
    </location>
</feature>